<proteinExistence type="evidence at protein level"/>
<keyword id="KW-0150">Chloroplast</keyword>
<keyword id="KW-0472">Membrane</keyword>
<keyword id="KW-0934">Plastid</keyword>
<keyword id="KW-0808">Transferase</keyword>
<keyword id="KW-0809">Transit peptide</keyword>
<keyword id="KW-0812">Transmembrane</keyword>
<keyword id="KW-1133">Transmembrane helix</keyword>
<reference key="1">
    <citation type="journal article" date="2015" name="Plant Physiol.">
        <title>A heteromeric membrane-bound prenyltransferase complex from hop catalyzes three sequential aromatic prenylations in the bitter Acid pathway.</title>
        <authorList>
            <person name="Li H."/>
            <person name="Ban Z."/>
            <person name="Qin H."/>
            <person name="Ma L."/>
            <person name="King A.J."/>
            <person name="Wang G."/>
        </authorList>
    </citation>
    <scope>NUCLEOTIDE SEQUENCE [MRNA]</scope>
    <scope>FUNCTION</scope>
    <scope>CATALYTIC ACTIVITY</scope>
    <scope>INTERACTION WITH PT1L</scope>
    <scope>SUBCELLULAR LOCATION</scope>
    <scope>TISSUE SPECIFICITY</scope>
    <scope>MUTAGENESIS OF ASP-174; ASP-178; ASP-302 AND ASP-305</scope>
    <scope>PATHWAY</scope>
    <source>
        <strain>cv. Nugget</strain>
        <tissue>Lupulin gland</tissue>
    </source>
</reference>
<reference key="2">
    <citation type="journal article" date="2019" name="Nat. Prod. Rep.">
        <title>Non-volatile natural products in plant glandular trichomes: chemistry, biological activities and biosynthesis.</title>
        <authorList>
            <person name="Liu Y."/>
            <person name="Jing S.-X."/>
            <person name="Luo S.-H."/>
            <person name="Li S.-H."/>
        </authorList>
    </citation>
    <scope>PATHWAY</scope>
    <scope>REVIEW</scope>
</reference>
<dbReference type="EC" id="2.5.1.137" evidence="3"/>
<dbReference type="EMBL" id="KM222442">
    <property type="protein sequence ID" value="AJD80255.1"/>
    <property type="molecule type" value="mRNA"/>
</dbReference>
<dbReference type="RefSeq" id="XP_062101330.1">
    <property type="nucleotide sequence ID" value="XM_062245346.1"/>
</dbReference>
<dbReference type="GeneID" id="133807175"/>
<dbReference type="KEGG" id="ag:AJD80255"/>
<dbReference type="BioCyc" id="MetaCyc:MONOMER-12004"/>
<dbReference type="BRENDA" id="2.5.1.137">
    <property type="organism ID" value="2716"/>
</dbReference>
<dbReference type="GO" id="GO:0031969">
    <property type="term" value="C:chloroplast membrane"/>
    <property type="evidence" value="ECO:0007669"/>
    <property type="project" value="UniProtKB-SubCell"/>
</dbReference>
<dbReference type="GO" id="GO:0016765">
    <property type="term" value="F:transferase activity, transferring alkyl or aryl (other than methyl) groups"/>
    <property type="evidence" value="ECO:0007669"/>
    <property type="project" value="InterPro"/>
</dbReference>
<dbReference type="Gene3D" id="1.10.357.140">
    <property type="entry name" value="UbiA prenyltransferase"/>
    <property type="match status" value="1"/>
</dbReference>
<dbReference type="InterPro" id="IPR000537">
    <property type="entry name" value="UbiA_prenyltransferase"/>
</dbReference>
<dbReference type="InterPro" id="IPR044878">
    <property type="entry name" value="UbiA_sf"/>
</dbReference>
<dbReference type="PANTHER" id="PTHR43009">
    <property type="entry name" value="HOMOGENTISATE SOLANESYLTRANSFERASE, CHLOROPLASTIC"/>
    <property type="match status" value="1"/>
</dbReference>
<dbReference type="PANTHER" id="PTHR43009:SF10">
    <property type="entry name" value="HOMOGENTISATE SOLANESYLTRANSFERASE, CHLOROPLASTIC"/>
    <property type="match status" value="1"/>
</dbReference>
<dbReference type="Pfam" id="PF01040">
    <property type="entry name" value="UbiA"/>
    <property type="match status" value="1"/>
</dbReference>
<feature type="transit peptide" description="Chloroplast" evidence="2">
    <location>
        <begin position="1"/>
        <end position="46"/>
    </location>
</feature>
<feature type="chain" id="PRO_0000439228" description="2-acyl-4-prenylphloroglucinol 6-prenyltransferase, chloroplastic" evidence="2">
    <location>
        <begin position="47"/>
        <end position="408"/>
    </location>
</feature>
<feature type="transmembrane region" description="Helical" evidence="2">
    <location>
        <begin position="119"/>
        <end position="139"/>
    </location>
</feature>
<feature type="transmembrane region" description="Helical" evidence="2">
    <location>
        <begin position="146"/>
        <end position="166"/>
    </location>
</feature>
<feature type="transmembrane region" description="Helical" evidence="2">
    <location>
        <begin position="193"/>
        <end position="213"/>
    </location>
</feature>
<feature type="transmembrane region" description="Helical" evidence="2">
    <location>
        <begin position="217"/>
        <end position="237"/>
    </location>
</feature>
<feature type="transmembrane region" description="Helical" evidence="2">
    <location>
        <begin position="257"/>
        <end position="277"/>
    </location>
</feature>
<feature type="transmembrane region" description="Helical" evidence="2">
    <location>
        <begin position="281"/>
        <end position="301"/>
    </location>
</feature>
<feature type="transmembrane region" description="Helical" evidence="2">
    <location>
        <begin position="326"/>
        <end position="346"/>
    </location>
</feature>
<feature type="transmembrane region" description="Helical" evidence="2">
    <location>
        <begin position="355"/>
        <end position="375"/>
    </location>
</feature>
<feature type="transmembrane region" description="Helical" evidence="2">
    <location>
        <begin position="388"/>
        <end position="408"/>
    </location>
</feature>
<feature type="mutagenesis site" description="Loss of catalytic activity; when associated with A-178." evidence="3">
    <original>D</original>
    <variation>A</variation>
    <location>
        <position position="174"/>
    </location>
</feature>
<feature type="mutagenesis site" description="Loss of catalytic activity; when associated with A-174." evidence="3">
    <original>D</original>
    <variation>A</variation>
    <location>
        <position position="178"/>
    </location>
</feature>
<feature type="mutagenesis site" description="Loss of catalytic activity; when associated with A-305." evidence="3">
    <original>D</original>
    <variation>A</variation>
    <location>
        <position position="302"/>
    </location>
</feature>
<feature type="mutagenesis site" description="Loss of catalytic activity; when associated with A-302." evidence="3">
    <original>D</original>
    <variation>A</variation>
    <location>
        <position position="305"/>
    </location>
</feature>
<sequence>MELSSACNLSLKPNYYYYPTSLFPSNNSYNNLKASSYYQTQRPIKCCSYSPSKYCSTKKLQTTHLLGLYAKHKCLKPFSIGHLPRPNSLTAWSHQSEFPSTIVTKGSNFGHASWKFVRPIPFVAVSIICTSLFGAELLKNPNLFSWQLMFDAFQGLVVILLYHIYINGLNQIYDLESDRINKPDLPLAAEEMSVKSAWFLTIFSAVASLLLMIKLKCGLFLTCMYCCYLVIGAMYSVPPFRWKMNTFTSTLWNFSEIGIGINFLINYASRATLGLPFQWRPPFTFIIGFVSTLSIILSILKDVPDVEGDKKVGMSTLPVIFGARTIVLVGSGFFLLNYVAAIGVAIMWPQAFKGYIMIPAHAIFASALIFKTWLLDKANYAKEASDSYYHFLWFLMIAEYILYPFIST</sequence>
<evidence type="ECO:0000250" key="1">
    <source>
        <dbReference type="UniProtKB" id="E5RP65"/>
    </source>
</evidence>
<evidence type="ECO:0000255" key="2"/>
<evidence type="ECO:0000269" key="3">
    <source>
    </source>
</evidence>
<evidence type="ECO:0000303" key="4">
    <source>
    </source>
</evidence>
<evidence type="ECO:0000305" key="5"/>
<evidence type="ECO:0000305" key="6">
    <source>
    </source>
</evidence>
<comment type="function">
    <text evidence="3 6">Involved in the biosynthesis of prenylated phenolics natural products which contribute to the bitter taste of beer and display broad biological activities (Probable). Catalyzes the two last prenylation steps in the beta-bitter acid pathway (PubMed:25564559). Uses dimethylallyl diphosphate (DMAPP) as the prenyl donor (PubMed:25564559).</text>
</comment>
<comment type="catalytic activity">
    <reaction evidence="3">
        <text>a 2-acyl-4-prenylphloroglucinol + dimethylallyl diphosphate = a 2-acyl-4,6-diprenylphloroglucinol + diphosphate</text>
        <dbReference type="Rhea" id="RHEA:51756"/>
        <dbReference type="ChEBI" id="CHEBI:33019"/>
        <dbReference type="ChEBI" id="CHEBI:57623"/>
        <dbReference type="ChEBI" id="CHEBI:134346"/>
        <dbReference type="ChEBI" id="CHEBI:134371"/>
        <dbReference type="EC" id="2.5.1.137"/>
    </reaction>
</comment>
<comment type="catalytic activity">
    <reaction evidence="3">
        <text>a 2-acyl-4,6-diprenylphloroglucinol + dimethylallyl diphosphate = a 2-acyl-4,6,6-triprenylphloroglucinol + diphosphate</text>
        <dbReference type="Rhea" id="RHEA:51760"/>
        <dbReference type="ChEBI" id="CHEBI:33019"/>
        <dbReference type="ChEBI" id="CHEBI:57623"/>
        <dbReference type="ChEBI" id="CHEBI:134346"/>
        <dbReference type="ChEBI" id="CHEBI:134348"/>
        <dbReference type="EC" id="2.5.1.137"/>
    </reaction>
</comment>
<comment type="cofactor">
    <cofactor evidence="1">
        <name>Mg(2+)</name>
        <dbReference type="ChEBI" id="CHEBI:18420"/>
    </cofactor>
</comment>
<comment type="pathway">
    <text evidence="6">Secondary metabolite biosynthesis.</text>
</comment>
<comment type="subunit">
    <text evidence="3">Homo- and heteromer. Interacts with PT1L, forming a functional metabolon.</text>
</comment>
<comment type="subcellular location">
    <subcellularLocation>
        <location evidence="3">Plastid</location>
    </subcellularLocation>
    <subcellularLocation>
        <location evidence="2">Plastid</location>
        <location evidence="2">Chloroplast membrane</location>
        <topology evidence="2">Multi-pass membrane protein</topology>
    </subcellularLocation>
</comment>
<comment type="tissue specificity">
    <text evidence="3">Expressed in trichomes.</text>
</comment>
<comment type="similarity">
    <text evidence="5">Belongs to the UbiA prenyltransferase family.</text>
</comment>
<name>PT2_HUMLU</name>
<accession>A0A0B4ZTQ2</accession>
<organism>
    <name type="scientific">Humulus lupulus</name>
    <name type="common">European hop</name>
    <dbReference type="NCBI Taxonomy" id="3486"/>
    <lineage>
        <taxon>Eukaryota</taxon>
        <taxon>Viridiplantae</taxon>
        <taxon>Streptophyta</taxon>
        <taxon>Embryophyta</taxon>
        <taxon>Tracheophyta</taxon>
        <taxon>Spermatophyta</taxon>
        <taxon>Magnoliopsida</taxon>
        <taxon>eudicotyledons</taxon>
        <taxon>Gunneridae</taxon>
        <taxon>Pentapetalae</taxon>
        <taxon>rosids</taxon>
        <taxon>fabids</taxon>
        <taxon>Rosales</taxon>
        <taxon>Cannabaceae</taxon>
        <taxon>Humulus</taxon>
    </lineage>
</organism>
<protein>
    <recommendedName>
        <fullName evidence="5">2-acyl-4-prenylphloroglucinol 6-prenyltransferase, chloroplastic</fullName>
        <ecNumber evidence="3">2.5.1.137</ecNumber>
    </recommendedName>
    <alternativeName>
        <fullName evidence="4">Aromatic prenyltransferase PT2</fullName>
    </alternativeName>
    <alternativeName>
        <fullName evidence="4">Humulus lupulus prenyltransferase-2</fullName>
        <shortName evidence="4">HlPT2</shortName>
    </alternativeName>
</protein>